<evidence type="ECO:0000255" key="1">
    <source>
        <dbReference type="PROSITE-ProRule" id="PRU00218"/>
    </source>
</evidence>
<evidence type="ECO:0000255" key="2">
    <source>
        <dbReference type="PROSITE-ProRule" id="PRU00373"/>
    </source>
</evidence>
<evidence type="ECO:0000256" key="3">
    <source>
        <dbReference type="SAM" id="MobiDB-lite"/>
    </source>
</evidence>
<evidence type="ECO:0000269" key="4">
    <source>
    </source>
</evidence>
<evidence type="ECO:0000269" key="5">
    <source>
    </source>
</evidence>
<evidence type="ECO:0000303" key="6">
    <source>
    </source>
</evidence>
<evidence type="ECO:0000303" key="7">
    <source>
    </source>
</evidence>
<evidence type="ECO:0000305" key="8"/>
<evidence type="ECO:0000305" key="9">
    <source>
    </source>
</evidence>
<evidence type="ECO:0000312" key="10">
    <source>
        <dbReference type="Araport" id="AT4G32760"/>
    </source>
</evidence>
<evidence type="ECO:0000312" key="11">
    <source>
        <dbReference type="EMBL" id="AEE86114.1"/>
    </source>
</evidence>
<evidence type="ECO:0000312" key="12">
    <source>
        <dbReference type="EMBL" id="CAA18585.1"/>
    </source>
</evidence>
<reference key="1">
    <citation type="journal article" date="1999" name="Nature">
        <title>Sequence and analysis of chromosome 4 of the plant Arabidopsis thaliana.</title>
        <authorList>
            <person name="Mayer K.F.X."/>
            <person name="Schueller C."/>
            <person name="Wambutt R."/>
            <person name="Murphy G."/>
            <person name="Volckaert G."/>
            <person name="Pohl T."/>
            <person name="Duesterhoeft A."/>
            <person name="Stiekema W."/>
            <person name="Entian K.-D."/>
            <person name="Terryn N."/>
            <person name="Harris B."/>
            <person name="Ansorge W."/>
            <person name="Brandt P."/>
            <person name="Grivell L.A."/>
            <person name="Rieger M."/>
            <person name="Weichselgartner M."/>
            <person name="de Simone V."/>
            <person name="Obermaier B."/>
            <person name="Mache R."/>
            <person name="Mueller M."/>
            <person name="Kreis M."/>
            <person name="Delseny M."/>
            <person name="Puigdomenech P."/>
            <person name="Watson M."/>
            <person name="Schmidtheini T."/>
            <person name="Reichert B."/>
            <person name="Portetelle D."/>
            <person name="Perez-Alonso M."/>
            <person name="Boutry M."/>
            <person name="Bancroft I."/>
            <person name="Vos P."/>
            <person name="Hoheisel J."/>
            <person name="Zimmermann W."/>
            <person name="Wedler H."/>
            <person name="Ridley P."/>
            <person name="Langham S.-A."/>
            <person name="McCullagh B."/>
            <person name="Bilham L."/>
            <person name="Robben J."/>
            <person name="van der Schueren J."/>
            <person name="Grymonprez B."/>
            <person name="Chuang Y.-J."/>
            <person name="Vandenbussche F."/>
            <person name="Braeken M."/>
            <person name="Weltjens I."/>
            <person name="Voet M."/>
            <person name="Bastiaens I."/>
            <person name="Aert R."/>
            <person name="Defoor E."/>
            <person name="Weitzenegger T."/>
            <person name="Bothe G."/>
            <person name="Ramsperger U."/>
            <person name="Hilbert H."/>
            <person name="Braun M."/>
            <person name="Holzer E."/>
            <person name="Brandt A."/>
            <person name="Peters S."/>
            <person name="van Staveren M."/>
            <person name="Dirkse W."/>
            <person name="Mooijman P."/>
            <person name="Klein Lankhorst R."/>
            <person name="Rose M."/>
            <person name="Hauf J."/>
            <person name="Koetter P."/>
            <person name="Berneiser S."/>
            <person name="Hempel S."/>
            <person name="Feldpausch M."/>
            <person name="Lamberth S."/>
            <person name="Van den Daele H."/>
            <person name="De Keyser A."/>
            <person name="Buysshaert C."/>
            <person name="Gielen J."/>
            <person name="Villarroel R."/>
            <person name="De Clercq R."/>
            <person name="van Montagu M."/>
            <person name="Rogers J."/>
            <person name="Cronin A."/>
            <person name="Quail M.A."/>
            <person name="Bray-Allen S."/>
            <person name="Clark L."/>
            <person name="Doggett J."/>
            <person name="Hall S."/>
            <person name="Kay M."/>
            <person name="Lennard N."/>
            <person name="McLay K."/>
            <person name="Mayes R."/>
            <person name="Pettett A."/>
            <person name="Rajandream M.A."/>
            <person name="Lyne M."/>
            <person name="Benes V."/>
            <person name="Rechmann S."/>
            <person name="Borkova D."/>
            <person name="Bloecker H."/>
            <person name="Scharfe M."/>
            <person name="Grimm M."/>
            <person name="Loehnert T.-H."/>
            <person name="Dose S."/>
            <person name="de Haan M."/>
            <person name="Maarse A.C."/>
            <person name="Schaefer M."/>
            <person name="Mueller-Auer S."/>
            <person name="Gabel C."/>
            <person name="Fuchs M."/>
            <person name="Fartmann B."/>
            <person name="Granderath K."/>
            <person name="Dauner D."/>
            <person name="Herzl A."/>
            <person name="Neumann S."/>
            <person name="Argiriou A."/>
            <person name="Vitale D."/>
            <person name="Liguori R."/>
            <person name="Piravandi E."/>
            <person name="Massenet O."/>
            <person name="Quigley F."/>
            <person name="Clabauld G."/>
            <person name="Muendlein A."/>
            <person name="Felber R."/>
            <person name="Schnabl S."/>
            <person name="Hiller R."/>
            <person name="Schmidt W."/>
            <person name="Lecharny A."/>
            <person name="Aubourg S."/>
            <person name="Chefdor F."/>
            <person name="Cooke R."/>
            <person name="Berger C."/>
            <person name="Monfort A."/>
            <person name="Casacuberta E."/>
            <person name="Gibbons T."/>
            <person name="Weber N."/>
            <person name="Vandenbol M."/>
            <person name="Bargues M."/>
            <person name="Terol J."/>
            <person name="Torres A."/>
            <person name="Perez-Perez A."/>
            <person name="Purnelle B."/>
            <person name="Bent E."/>
            <person name="Johnson S."/>
            <person name="Tacon D."/>
            <person name="Jesse T."/>
            <person name="Heijnen L."/>
            <person name="Schwarz S."/>
            <person name="Scholler P."/>
            <person name="Heber S."/>
            <person name="Francs P."/>
            <person name="Bielke C."/>
            <person name="Frishman D."/>
            <person name="Haase D."/>
            <person name="Lemcke K."/>
            <person name="Mewes H.-W."/>
            <person name="Stocker S."/>
            <person name="Zaccaria P."/>
            <person name="Bevan M."/>
            <person name="Wilson R.K."/>
            <person name="de la Bastide M."/>
            <person name="Habermann K."/>
            <person name="Parnell L."/>
            <person name="Dedhia N."/>
            <person name="Gnoj L."/>
            <person name="Schutz K."/>
            <person name="Huang E."/>
            <person name="Spiegel L."/>
            <person name="Sekhon M."/>
            <person name="Murray J."/>
            <person name="Sheet P."/>
            <person name="Cordes M."/>
            <person name="Abu-Threideh J."/>
            <person name="Stoneking T."/>
            <person name="Kalicki J."/>
            <person name="Graves T."/>
            <person name="Harmon G."/>
            <person name="Edwards J."/>
            <person name="Latreille P."/>
            <person name="Courtney L."/>
            <person name="Cloud J."/>
            <person name="Abbott A."/>
            <person name="Scott K."/>
            <person name="Johnson D."/>
            <person name="Minx P."/>
            <person name="Bentley D."/>
            <person name="Fulton B."/>
            <person name="Miller N."/>
            <person name="Greco T."/>
            <person name="Kemp K."/>
            <person name="Kramer J."/>
            <person name="Fulton L."/>
            <person name="Mardis E."/>
            <person name="Dante M."/>
            <person name="Pepin K."/>
            <person name="Hillier L.W."/>
            <person name="Nelson J."/>
            <person name="Spieth J."/>
            <person name="Ryan E."/>
            <person name="Andrews S."/>
            <person name="Geisel C."/>
            <person name="Layman D."/>
            <person name="Du H."/>
            <person name="Ali J."/>
            <person name="Berghoff A."/>
            <person name="Jones K."/>
            <person name="Drone K."/>
            <person name="Cotton M."/>
            <person name="Joshu C."/>
            <person name="Antonoiu B."/>
            <person name="Zidanic M."/>
            <person name="Strong C."/>
            <person name="Sun H."/>
            <person name="Lamar B."/>
            <person name="Yordan C."/>
            <person name="Ma P."/>
            <person name="Zhong J."/>
            <person name="Preston R."/>
            <person name="Vil D."/>
            <person name="Shekher M."/>
            <person name="Matero A."/>
            <person name="Shah R."/>
            <person name="Swaby I.K."/>
            <person name="O'Shaughnessy A."/>
            <person name="Rodriguez M."/>
            <person name="Hoffman J."/>
            <person name="Till S."/>
            <person name="Granat S."/>
            <person name="Shohdy N."/>
            <person name="Hasegawa A."/>
            <person name="Hameed A."/>
            <person name="Lodhi M."/>
            <person name="Johnson A."/>
            <person name="Chen E."/>
            <person name="Marra M.A."/>
            <person name="Martienssen R."/>
            <person name="McCombie W.R."/>
        </authorList>
    </citation>
    <scope>NUCLEOTIDE SEQUENCE [LARGE SCALE GENOMIC DNA]</scope>
    <source>
        <strain>cv. Columbia</strain>
    </source>
</reference>
<reference key="2">
    <citation type="journal article" date="2017" name="Plant J.">
        <title>Araport11: a complete reannotation of the Arabidopsis thaliana reference genome.</title>
        <authorList>
            <person name="Cheng C.Y."/>
            <person name="Krishnakumar V."/>
            <person name="Chan A.P."/>
            <person name="Thibaud-Nissen F."/>
            <person name="Schobel S."/>
            <person name="Town C.D."/>
        </authorList>
    </citation>
    <scope>GENOME REANNOTATION</scope>
    <source>
        <strain>cv. Columbia</strain>
    </source>
</reference>
<reference key="3">
    <citation type="journal article" date="2003" name="Science">
        <title>Empirical analysis of transcriptional activity in the Arabidopsis genome.</title>
        <authorList>
            <person name="Yamada K."/>
            <person name="Lim J."/>
            <person name="Dale J.M."/>
            <person name="Chen H."/>
            <person name="Shinn P."/>
            <person name="Palm C.J."/>
            <person name="Southwick A.M."/>
            <person name="Wu H.C."/>
            <person name="Kim C.J."/>
            <person name="Nguyen M."/>
            <person name="Pham P.K."/>
            <person name="Cheuk R.F."/>
            <person name="Karlin-Newmann G."/>
            <person name="Liu S.X."/>
            <person name="Lam B."/>
            <person name="Sakano H."/>
            <person name="Wu T."/>
            <person name="Yu G."/>
            <person name="Miranda M."/>
            <person name="Quach H.L."/>
            <person name="Tripp M."/>
            <person name="Chang C.H."/>
            <person name="Lee J.M."/>
            <person name="Toriumi M.J."/>
            <person name="Chan M.M."/>
            <person name="Tang C.C."/>
            <person name="Onodera C.S."/>
            <person name="Deng J.M."/>
            <person name="Akiyama K."/>
            <person name="Ansari Y."/>
            <person name="Arakawa T."/>
            <person name="Banh J."/>
            <person name="Banno F."/>
            <person name="Bowser L."/>
            <person name="Brooks S.Y."/>
            <person name="Carninci P."/>
            <person name="Chao Q."/>
            <person name="Choy N."/>
            <person name="Enju A."/>
            <person name="Goldsmith A.D."/>
            <person name="Gurjal M."/>
            <person name="Hansen N.F."/>
            <person name="Hayashizaki Y."/>
            <person name="Johnson-Hopson C."/>
            <person name="Hsuan V.W."/>
            <person name="Iida K."/>
            <person name="Karnes M."/>
            <person name="Khan S."/>
            <person name="Koesema E."/>
            <person name="Ishida J."/>
            <person name="Jiang P.X."/>
            <person name="Jones T."/>
            <person name="Kawai J."/>
            <person name="Kamiya A."/>
            <person name="Meyers C."/>
            <person name="Nakajima M."/>
            <person name="Narusaka M."/>
            <person name="Seki M."/>
            <person name="Sakurai T."/>
            <person name="Satou M."/>
            <person name="Tamse R."/>
            <person name="Vaysberg M."/>
            <person name="Wallender E.K."/>
            <person name="Wong C."/>
            <person name="Yamamura Y."/>
            <person name="Yuan S."/>
            <person name="Shinozaki K."/>
            <person name="Davis R.W."/>
            <person name="Theologis A."/>
            <person name="Ecker J.R."/>
        </authorList>
    </citation>
    <scope>NUCLEOTIDE SEQUENCE [LARGE SCALE MRNA]</scope>
    <source>
        <strain>cv. Columbia</strain>
    </source>
</reference>
<reference key="4">
    <citation type="journal article" date="2006" name="Trends Plant Sci.">
        <title>Exploring the ESCRTing machinery in eukaryotes.</title>
        <authorList>
            <person name="Winter V."/>
            <person name="Hauser M.-T."/>
        </authorList>
    </citation>
    <scope>GENE FAMILY</scope>
    <scope>REVIEW</scope>
</reference>
<reference key="5">
    <citation type="journal article" date="2011" name="Front. Plant Sci.">
        <title>Protein-protein interaction network and subcellular localization of the Arabidopsis thaliana ESCRT machinery.</title>
        <authorList>
            <person name="Richardson L.G."/>
            <person name="Howard A.S."/>
            <person name="Khuu N."/>
            <person name="Gidda S.K."/>
            <person name="McCartney A."/>
            <person name="Morphy B.J."/>
            <person name="Mullen R.T."/>
        </authorList>
    </citation>
    <scope>GENE FAMILY</scope>
    <scope>NOMENCLATURE</scope>
    <scope>INTERACTION WITH ELC AND ELCL</scope>
    <scope>SUBCELLULAR LOCATION</scope>
</reference>
<reference key="6">
    <citation type="journal article" date="2013" name="Curr. Biol.">
        <title>Arabidopsis TOL proteins act as gatekeepers for vacuolar sorting of PIN2 plasma membrane protein.</title>
        <authorList>
            <person name="Korbei B."/>
            <person name="Moulinier-Anzola J."/>
            <person name="De-Araujo L."/>
            <person name="Lucyshyn D."/>
            <person name="Retzer K."/>
            <person name="Khan M.A."/>
            <person name="Luschnig C."/>
        </authorList>
    </citation>
    <scope>GENE FAMILY</scope>
    <scope>NOMENCLATURE</scope>
</reference>
<reference key="7">
    <citation type="journal article" date="2014" name="Plant Signal. Behav.">
        <title>Expression of Arabidopsis TOL genes.</title>
        <authorList>
            <person name="Moulinier-Anzola J."/>
            <person name="De-Araujo L."/>
            <person name="Korbei B."/>
        </authorList>
    </citation>
    <scope>TISSUE SPECIFICITY</scope>
</reference>
<keyword id="KW-0025">Alternative splicing</keyword>
<keyword id="KW-0963">Cytoplasm</keyword>
<keyword id="KW-0472">Membrane</keyword>
<keyword id="KW-0653">Protein transport</keyword>
<keyword id="KW-1185">Reference proteome</keyword>
<keyword id="KW-0813">Transport</keyword>
<comment type="function">
    <text evidence="9">Might contribute to the loading of the ESCRT machinery.</text>
</comment>
<comment type="subunit">
    <text evidence="4">Interacts with ELC/VPS23A and ELCL/VPS23B.</text>
</comment>
<comment type="subcellular location">
    <subcellularLocation>
        <location evidence="4">Cytoplasm</location>
    </subcellularLocation>
    <subcellularLocation>
        <location evidence="8">Membrane</location>
        <topology evidence="8">Peripheral membrane protein</topology>
    </subcellularLocation>
</comment>
<comment type="alternative products">
    <event type="alternative splicing"/>
    <isoform>
        <id>Q8L860-1</id>
        <name>1</name>
        <sequence type="displayed"/>
    </isoform>
    <text evidence="8">Additional isoforms seem to exist.</text>
</comment>
<comment type="tissue specificity">
    <text evidence="5">Ubiquitously expressed.</text>
</comment>
<comment type="similarity">
    <text evidence="8">Belongs to the TOM1 family.</text>
</comment>
<comment type="sequence caution" evidence="8">
    <conflict type="erroneous translation">
        <sequence resource="EMBL-CDS" id="CAA18585"/>
    </conflict>
</comment>
<comment type="sequence caution" evidence="8">
    <conflict type="erroneous translation">
        <sequence resource="EMBL-CDS" id="CAB79993"/>
    </conflict>
</comment>
<name>TOL9_ARATH</name>
<organism>
    <name type="scientific">Arabidopsis thaliana</name>
    <name type="common">Mouse-ear cress</name>
    <dbReference type="NCBI Taxonomy" id="3702"/>
    <lineage>
        <taxon>Eukaryota</taxon>
        <taxon>Viridiplantae</taxon>
        <taxon>Streptophyta</taxon>
        <taxon>Embryophyta</taxon>
        <taxon>Tracheophyta</taxon>
        <taxon>Spermatophyta</taxon>
        <taxon>Magnoliopsida</taxon>
        <taxon>eudicotyledons</taxon>
        <taxon>Gunneridae</taxon>
        <taxon>Pentapetalae</taxon>
        <taxon>rosids</taxon>
        <taxon>malvids</taxon>
        <taxon>Brassicales</taxon>
        <taxon>Brassicaceae</taxon>
        <taxon>Camelineae</taxon>
        <taxon>Arabidopsis</taxon>
    </lineage>
</organism>
<dbReference type="EMBL" id="AL022537">
    <property type="protein sequence ID" value="CAA18585.1"/>
    <property type="status" value="ALT_SEQ"/>
    <property type="molecule type" value="Genomic_DNA"/>
</dbReference>
<dbReference type="EMBL" id="AL161582">
    <property type="protein sequence ID" value="CAB79993.1"/>
    <property type="status" value="ALT_SEQ"/>
    <property type="molecule type" value="Genomic_DNA"/>
</dbReference>
<dbReference type="EMBL" id="CP002687">
    <property type="protein sequence ID" value="AEE86114.1"/>
    <property type="molecule type" value="Genomic_DNA"/>
</dbReference>
<dbReference type="EMBL" id="AY120724">
    <property type="protein sequence ID" value="AAM53282.1"/>
    <property type="molecule type" value="mRNA"/>
</dbReference>
<dbReference type="EMBL" id="BT000033">
    <property type="protein sequence ID" value="AAN15352.1"/>
    <property type="molecule type" value="mRNA"/>
</dbReference>
<dbReference type="PIR" id="T04449">
    <property type="entry name" value="T04449"/>
</dbReference>
<dbReference type="RefSeq" id="NP_195002.2">
    <molecule id="Q8L860-1"/>
    <property type="nucleotide sequence ID" value="NM_119429.3"/>
</dbReference>
<dbReference type="SMR" id="Q8L860"/>
<dbReference type="FunCoup" id="Q8L860">
    <property type="interactions" value="3197"/>
</dbReference>
<dbReference type="IntAct" id="Q8L860">
    <property type="interactions" value="8"/>
</dbReference>
<dbReference type="STRING" id="3702.Q8L860"/>
<dbReference type="iPTMnet" id="Q8L860"/>
<dbReference type="MetOSite" id="Q8L860"/>
<dbReference type="PaxDb" id="3702-AT4G32760.2"/>
<dbReference type="EnsemblPlants" id="AT4G32760.1">
    <molecule id="Q8L860-1"/>
    <property type="protein sequence ID" value="AT4G32760.1"/>
    <property type="gene ID" value="AT4G32760"/>
</dbReference>
<dbReference type="GeneID" id="829412"/>
<dbReference type="Gramene" id="AT4G32760.1">
    <molecule id="Q8L860-1"/>
    <property type="protein sequence ID" value="AT4G32760.1"/>
    <property type="gene ID" value="AT4G32760"/>
</dbReference>
<dbReference type="KEGG" id="ath:AT4G32760"/>
<dbReference type="Araport" id="AT4G32760"/>
<dbReference type="TAIR" id="AT4G32760"/>
<dbReference type="eggNOG" id="KOG1087">
    <property type="taxonomic scope" value="Eukaryota"/>
</dbReference>
<dbReference type="InParanoid" id="Q8L860"/>
<dbReference type="OMA" id="SAGMYPQ"/>
<dbReference type="OrthoDB" id="2018246at2759"/>
<dbReference type="PhylomeDB" id="Q8L860"/>
<dbReference type="CD-CODE" id="4299E36E">
    <property type="entry name" value="Nucleolus"/>
</dbReference>
<dbReference type="PRO" id="PR:Q8L860"/>
<dbReference type="Proteomes" id="UP000006548">
    <property type="component" value="Chromosome 4"/>
</dbReference>
<dbReference type="ExpressionAtlas" id="Q8L860">
    <property type="expression patterns" value="baseline and differential"/>
</dbReference>
<dbReference type="GO" id="GO:0005737">
    <property type="term" value="C:cytoplasm"/>
    <property type="evidence" value="ECO:0000314"/>
    <property type="project" value="UniProtKB"/>
</dbReference>
<dbReference type="GO" id="GO:0016020">
    <property type="term" value="C:membrane"/>
    <property type="evidence" value="ECO:0007669"/>
    <property type="project" value="UniProtKB-SubCell"/>
</dbReference>
<dbReference type="GO" id="GO:0035091">
    <property type="term" value="F:phosphatidylinositol binding"/>
    <property type="evidence" value="ECO:0007669"/>
    <property type="project" value="InterPro"/>
</dbReference>
<dbReference type="GO" id="GO:0043130">
    <property type="term" value="F:ubiquitin binding"/>
    <property type="evidence" value="ECO:0007669"/>
    <property type="project" value="InterPro"/>
</dbReference>
<dbReference type="GO" id="GO:0043328">
    <property type="term" value="P:protein transport to vacuole involved in ubiquitin-dependent protein catabolic process via the multivesicular body sorting pathway"/>
    <property type="evidence" value="ECO:0007669"/>
    <property type="project" value="InterPro"/>
</dbReference>
<dbReference type="CDD" id="cd14231">
    <property type="entry name" value="GAT_GGA-like_plant"/>
    <property type="match status" value="1"/>
</dbReference>
<dbReference type="CDD" id="cd03561">
    <property type="entry name" value="VHS"/>
    <property type="match status" value="1"/>
</dbReference>
<dbReference type="FunFam" id="1.20.58.160:FF:000004">
    <property type="entry name" value="TOM1-like protein 2"/>
    <property type="match status" value="1"/>
</dbReference>
<dbReference type="FunFam" id="1.25.40.90:FF:000028">
    <property type="entry name" value="TOM1-like protein 2"/>
    <property type="match status" value="1"/>
</dbReference>
<dbReference type="Gene3D" id="1.20.58.160">
    <property type="match status" value="1"/>
</dbReference>
<dbReference type="Gene3D" id="1.25.40.90">
    <property type="match status" value="1"/>
</dbReference>
<dbReference type="InterPro" id="IPR008942">
    <property type="entry name" value="ENTH_VHS"/>
</dbReference>
<dbReference type="InterPro" id="IPR004152">
    <property type="entry name" value="GAT_dom"/>
</dbReference>
<dbReference type="InterPro" id="IPR038425">
    <property type="entry name" value="GAT_sf"/>
</dbReference>
<dbReference type="InterPro" id="IPR044836">
    <property type="entry name" value="TOL_plant"/>
</dbReference>
<dbReference type="InterPro" id="IPR002014">
    <property type="entry name" value="VHS_dom"/>
</dbReference>
<dbReference type="PANTHER" id="PTHR45898:SF4">
    <property type="entry name" value="TARGET OF MYB PROTEIN 1"/>
    <property type="match status" value="1"/>
</dbReference>
<dbReference type="PANTHER" id="PTHR45898">
    <property type="entry name" value="TOM1-LIKE PROTEIN"/>
    <property type="match status" value="1"/>
</dbReference>
<dbReference type="Pfam" id="PF03127">
    <property type="entry name" value="GAT"/>
    <property type="match status" value="1"/>
</dbReference>
<dbReference type="Pfam" id="PF00790">
    <property type="entry name" value="VHS"/>
    <property type="match status" value="1"/>
</dbReference>
<dbReference type="SMART" id="SM00288">
    <property type="entry name" value="VHS"/>
    <property type="match status" value="1"/>
</dbReference>
<dbReference type="SUPFAM" id="SSF48464">
    <property type="entry name" value="ENTH/VHS domain"/>
    <property type="match status" value="1"/>
</dbReference>
<dbReference type="SUPFAM" id="SSF89009">
    <property type="entry name" value="GAT-like domain"/>
    <property type="match status" value="1"/>
</dbReference>
<dbReference type="PROSITE" id="PS50909">
    <property type="entry name" value="GAT"/>
    <property type="match status" value="1"/>
</dbReference>
<dbReference type="PROSITE" id="PS50179">
    <property type="entry name" value="VHS"/>
    <property type="match status" value="1"/>
</dbReference>
<feature type="chain" id="PRO_0000440684" description="TOM1-like protein 9">
    <location>
        <begin position="1"/>
        <end position="675"/>
    </location>
</feature>
<feature type="domain" description="VHS" evidence="1">
    <location>
        <begin position="9"/>
        <end position="138"/>
    </location>
</feature>
<feature type="domain" description="GAT" evidence="2">
    <location>
        <begin position="180"/>
        <end position="268"/>
    </location>
</feature>
<feature type="region of interest" description="Disordered" evidence="3">
    <location>
        <begin position="144"/>
        <end position="181"/>
    </location>
</feature>
<feature type="region of interest" description="Disordered" evidence="3">
    <location>
        <begin position="270"/>
        <end position="322"/>
    </location>
</feature>
<feature type="region of interest" description="Disordered" evidence="3">
    <location>
        <begin position="371"/>
        <end position="524"/>
    </location>
</feature>
<feature type="region of interest" description="Disordered" evidence="3">
    <location>
        <begin position="542"/>
        <end position="561"/>
    </location>
</feature>
<feature type="region of interest" description="Disordered" evidence="3">
    <location>
        <begin position="622"/>
        <end position="675"/>
    </location>
</feature>
<feature type="compositionally biased region" description="Polar residues" evidence="3">
    <location>
        <begin position="299"/>
        <end position="317"/>
    </location>
</feature>
<feature type="compositionally biased region" description="Polar residues" evidence="3">
    <location>
        <begin position="372"/>
        <end position="435"/>
    </location>
</feature>
<feature type="compositionally biased region" description="Low complexity" evidence="3">
    <location>
        <begin position="436"/>
        <end position="451"/>
    </location>
</feature>
<feature type="compositionally biased region" description="Polar residues" evidence="3">
    <location>
        <begin position="470"/>
        <end position="481"/>
    </location>
</feature>
<feature type="compositionally biased region" description="Polar residues" evidence="3">
    <location>
        <begin position="488"/>
        <end position="524"/>
    </location>
</feature>
<feature type="compositionally biased region" description="Basic and acidic residues" evidence="3">
    <location>
        <begin position="646"/>
        <end position="661"/>
    </location>
</feature>
<gene>
    <name evidence="7" type="primary">TOL9</name>
    <name evidence="6" type="synonym">TOM1D</name>
    <name evidence="10" type="ordered locus">At4g32760</name>
    <name evidence="11" type="ORF">F4D11.40</name>
    <name evidence="12" type="ORF">F4D11_40</name>
</gene>
<proteinExistence type="evidence at protein level"/>
<accession>Q8L860</accession>
<accession>O65525</accession>
<sequence>MVNAMVERATSEMLIGPDWAMNLEICDMLNSDPAQAKDVVKGIKKRIGSRNPKAQLLALTLLETIVKNCGDMVHMHVAEKGVIHEMVRIVKKKPDFHVKEKILVLIDTWQEAFGGPRARYPQYYAGYQELLRAGAVFPQRSERSAPVFTPPQTQPLTSYPPNLRNAGPGNDVPEPSAEPEFPTLSLSEIQNAKGIMDVLAEMLSALEPGNKEDLKQEVMVDLVEQCRTYKQRVVHLVNSTSDESLLCQGLALNDDLQRVLTNYEAIASGLPGTSSQIEKPKSETGKSLVDVDGPLIDTGDSSNQANGATSSSGNGVLNQLALPAPPVTNGSANSKIDLLSGDDLALVPVGPPQPASPVASDQNALALIDMFSDNTNNPSPATAPSGNPAQNIPLNPQGHQQPNSQAGEAGLQQSNGFAPQVGYSQFEQPSYGQGVSSPWSSQPAQQPVQPSYGAQDSTAFPPPPWEAQLQDYSPSAESGSPFSPGMHPTQTAFTHAQPVNNNNPYPQIPQTGPPVNNNSPYAQMPQTGQAVANISPYPQIPQNGVYMPNQPNQALGSGYQPQQQQQQQMMMAQYYAQQQQLQQQQQQQAYGNQMGGYGYGYNQQQQGSSPYLDQQMYGLSMRDQTSHQVASSSSTTSYLPPMKPKNKPEDKLFGDLVDISKFKPTKPTSGRAGTM</sequence>
<protein>
    <recommendedName>
        <fullName evidence="8">TOM1-like protein 9</fullName>
    </recommendedName>
</protein>